<gene>
    <name evidence="1" type="primary">groEL</name>
    <name evidence="1" type="synonym">groL</name>
    <name type="ordered locus">ECIAI39_4608</name>
</gene>
<reference key="1">
    <citation type="journal article" date="2009" name="PLoS Genet.">
        <title>Organised genome dynamics in the Escherichia coli species results in highly diverse adaptive paths.</title>
        <authorList>
            <person name="Touchon M."/>
            <person name="Hoede C."/>
            <person name="Tenaillon O."/>
            <person name="Barbe V."/>
            <person name="Baeriswyl S."/>
            <person name="Bidet P."/>
            <person name="Bingen E."/>
            <person name="Bonacorsi S."/>
            <person name="Bouchier C."/>
            <person name="Bouvet O."/>
            <person name="Calteau A."/>
            <person name="Chiapello H."/>
            <person name="Clermont O."/>
            <person name="Cruveiller S."/>
            <person name="Danchin A."/>
            <person name="Diard M."/>
            <person name="Dossat C."/>
            <person name="Karoui M.E."/>
            <person name="Frapy E."/>
            <person name="Garry L."/>
            <person name="Ghigo J.M."/>
            <person name="Gilles A.M."/>
            <person name="Johnson J."/>
            <person name="Le Bouguenec C."/>
            <person name="Lescat M."/>
            <person name="Mangenot S."/>
            <person name="Martinez-Jehanne V."/>
            <person name="Matic I."/>
            <person name="Nassif X."/>
            <person name="Oztas S."/>
            <person name="Petit M.A."/>
            <person name="Pichon C."/>
            <person name="Rouy Z."/>
            <person name="Ruf C.S."/>
            <person name="Schneider D."/>
            <person name="Tourret J."/>
            <person name="Vacherie B."/>
            <person name="Vallenet D."/>
            <person name="Medigue C."/>
            <person name="Rocha E.P.C."/>
            <person name="Denamur E."/>
        </authorList>
    </citation>
    <scope>NUCLEOTIDE SEQUENCE [LARGE SCALE GENOMIC DNA]</scope>
    <source>
        <strain>IAI39 / ExPEC</strain>
    </source>
</reference>
<proteinExistence type="inferred from homology"/>
<organism>
    <name type="scientific">Escherichia coli O7:K1 (strain IAI39 / ExPEC)</name>
    <dbReference type="NCBI Taxonomy" id="585057"/>
    <lineage>
        <taxon>Bacteria</taxon>
        <taxon>Pseudomonadati</taxon>
        <taxon>Pseudomonadota</taxon>
        <taxon>Gammaproteobacteria</taxon>
        <taxon>Enterobacterales</taxon>
        <taxon>Enterobacteriaceae</taxon>
        <taxon>Escherichia</taxon>
    </lineage>
</organism>
<dbReference type="EC" id="5.6.1.7" evidence="1"/>
<dbReference type="EMBL" id="CU928164">
    <property type="protein sequence ID" value="CAR20708.1"/>
    <property type="molecule type" value="Genomic_DNA"/>
</dbReference>
<dbReference type="RefSeq" id="WP_000729117.1">
    <property type="nucleotide sequence ID" value="NC_011750.1"/>
</dbReference>
<dbReference type="RefSeq" id="YP_002410472.1">
    <property type="nucleotide sequence ID" value="NC_011750.1"/>
</dbReference>
<dbReference type="SMR" id="B7NTK2"/>
<dbReference type="STRING" id="585057.ECIAI39_4608"/>
<dbReference type="GeneID" id="93777681"/>
<dbReference type="KEGG" id="ect:ECIAI39_4608"/>
<dbReference type="PATRIC" id="fig|585057.6.peg.4755"/>
<dbReference type="HOGENOM" id="CLU_016503_3_0_6"/>
<dbReference type="Proteomes" id="UP000000749">
    <property type="component" value="Chromosome"/>
</dbReference>
<dbReference type="GO" id="GO:0005737">
    <property type="term" value="C:cytoplasm"/>
    <property type="evidence" value="ECO:0007669"/>
    <property type="project" value="UniProtKB-SubCell"/>
</dbReference>
<dbReference type="GO" id="GO:0005524">
    <property type="term" value="F:ATP binding"/>
    <property type="evidence" value="ECO:0007669"/>
    <property type="project" value="UniProtKB-UniRule"/>
</dbReference>
<dbReference type="GO" id="GO:0140662">
    <property type="term" value="F:ATP-dependent protein folding chaperone"/>
    <property type="evidence" value="ECO:0007669"/>
    <property type="project" value="InterPro"/>
</dbReference>
<dbReference type="GO" id="GO:0016853">
    <property type="term" value="F:isomerase activity"/>
    <property type="evidence" value="ECO:0007669"/>
    <property type="project" value="UniProtKB-KW"/>
</dbReference>
<dbReference type="GO" id="GO:0051082">
    <property type="term" value="F:unfolded protein binding"/>
    <property type="evidence" value="ECO:0007669"/>
    <property type="project" value="UniProtKB-UniRule"/>
</dbReference>
<dbReference type="GO" id="GO:0042026">
    <property type="term" value="P:protein refolding"/>
    <property type="evidence" value="ECO:0007669"/>
    <property type="project" value="UniProtKB-UniRule"/>
</dbReference>
<dbReference type="CDD" id="cd03344">
    <property type="entry name" value="GroEL"/>
    <property type="match status" value="1"/>
</dbReference>
<dbReference type="FunFam" id="1.10.560.10:FF:000001">
    <property type="entry name" value="60 kDa chaperonin"/>
    <property type="match status" value="1"/>
</dbReference>
<dbReference type="FunFam" id="3.50.7.10:FF:000001">
    <property type="entry name" value="60 kDa chaperonin"/>
    <property type="match status" value="1"/>
</dbReference>
<dbReference type="Gene3D" id="3.50.7.10">
    <property type="entry name" value="GroEL"/>
    <property type="match status" value="1"/>
</dbReference>
<dbReference type="Gene3D" id="1.10.560.10">
    <property type="entry name" value="GroEL-like equatorial domain"/>
    <property type="match status" value="1"/>
</dbReference>
<dbReference type="Gene3D" id="3.30.260.10">
    <property type="entry name" value="TCP-1-like chaperonin intermediate domain"/>
    <property type="match status" value="1"/>
</dbReference>
<dbReference type="HAMAP" id="MF_00600">
    <property type="entry name" value="CH60"/>
    <property type="match status" value="1"/>
</dbReference>
<dbReference type="InterPro" id="IPR018370">
    <property type="entry name" value="Chaperonin_Cpn60_CS"/>
</dbReference>
<dbReference type="InterPro" id="IPR001844">
    <property type="entry name" value="Cpn60/GroEL"/>
</dbReference>
<dbReference type="InterPro" id="IPR002423">
    <property type="entry name" value="Cpn60/GroEL/TCP-1"/>
</dbReference>
<dbReference type="InterPro" id="IPR027409">
    <property type="entry name" value="GroEL-like_apical_dom_sf"/>
</dbReference>
<dbReference type="InterPro" id="IPR027413">
    <property type="entry name" value="GROEL-like_equatorial_sf"/>
</dbReference>
<dbReference type="InterPro" id="IPR027410">
    <property type="entry name" value="TCP-1-like_intermed_sf"/>
</dbReference>
<dbReference type="NCBIfam" id="TIGR02348">
    <property type="entry name" value="GroEL"/>
    <property type="match status" value="1"/>
</dbReference>
<dbReference type="NCBIfam" id="NF000592">
    <property type="entry name" value="PRK00013.1"/>
    <property type="match status" value="1"/>
</dbReference>
<dbReference type="NCBIfam" id="NF009487">
    <property type="entry name" value="PRK12849.1"/>
    <property type="match status" value="1"/>
</dbReference>
<dbReference type="NCBIfam" id="NF009488">
    <property type="entry name" value="PRK12850.1"/>
    <property type="match status" value="1"/>
</dbReference>
<dbReference type="NCBIfam" id="NF009489">
    <property type="entry name" value="PRK12851.1"/>
    <property type="match status" value="1"/>
</dbReference>
<dbReference type="PANTHER" id="PTHR45633">
    <property type="entry name" value="60 KDA HEAT SHOCK PROTEIN, MITOCHONDRIAL"/>
    <property type="match status" value="1"/>
</dbReference>
<dbReference type="Pfam" id="PF00118">
    <property type="entry name" value="Cpn60_TCP1"/>
    <property type="match status" value="1"/>
</dbReference>
<dbReference type="PRINTS" id="PR00298">
    <property type="entry name" value="CHAPERONIN60"/>
</dbReference>
<dbReference type="SUPFAM" id="SSF52029">
    <property type="entry name" value="GroEL apical domain-like"/>
    <property type="match status" value="1"/>
</dbReference>
<dbReference type="SUPFAM" id="SSF48592">
    <property type="entry name" value="GroEL equatorial domain-like"/>
    <property type="match status" value="1"/>
</dbReference>
<dbReference type="SUPFAM" id="SSF54849">
    <property type="entry name" value="GroEL-intermediate domain like"/>
    <property type="match status" value="1"/>
</dbReference>
<dbReference type="PROSITE" id="PS00296">
    <property type="entry name" value="CHAPERONINS_CPN60"/>
    <property type="match status" value="1"/>
</dbReference>
<name>CH60_ECO7I</name>
<comment type="function">
    <text evidence="1">Together with its co-chaperonin GroES, plays an essential role in assisting protein folding. The GroEL-GroES system forms a nano-cage that allows encapsulation of the non-native substrate proteins and provides a physical environment optimized to promote and accelerate protein folding.</text>
</comment>
<comment type="catalytic activity">
    <reaction evidence="1">
        <text>ATP + H2O + a folded polypeptide = ADP + phosphate + an unfolded polypeptide.</text>
        <dbReference type="EC" id="5.6.1.7"/>
    </reaction>
</comment>
<comment type="subunit">
    <text evidence="1">Forms a cylinder of 14 subunits composed of two heptameric rings stacked back-to-back. Interacts with the co-chaperonin GroES.</text>
</comment>
<comment type="subcellular location">
    <subcellularLocation>
        <location evidence="1">Cytoplasm</location>
    </subcellularLocation>
</comment>
<comment type="similarity">
    <text evidence="1">Belongs to the chaperonin (HSP60) family.</text>
</comment>
<evidence type="ECO:0000255" key="1">
    <source>
        <dbReference type="HAMAP-Rule" id="MF_00600"/>
    </source>
</evidence>
<sequence length="548" mass="57329">MAAKDVKFGNDARVKMLRGVNVLADAVKVTLGPKGRNVVLDKSFGAPTITKDGVSVAREIELEDKFENMGAQMVKEVASKANDAAGDGTTTATVLAQAIITEGLKAVAAGMNPMDLKRGIDKAVTAAVEELKALSVPCSDSKAIAQVGTISANSDETVGKLIAEAMDKVGKEGVITVEDGTGLQDELDVVEGMQFDRGYLSPYFINKPETGAVELESPFILLADKKISNIREMLPVLEAVAKAGKPLLIIAEDVEGEALATLVVNTMRGIVKVAAVKAPGFGDRRKAMLQDIATLTGGTVISEEIGMELEKATLEDLGQAKRVVINKDTTTIIDGVGEEAAIQGRVAQIRQQIEEATSDYDREKLQERVAKLAGGVAVIKVGAATEVEMKEKKARVEDALHATRAAVEEGVVAGGGVALIRVASKLADLRGQNEDQNVGIKVALRAMEAPLRQIVLNCGEEPSVVANTVKGGDGNYGYNAATEEYGNMIDMGILDPTKVTRSALQYAASVAGLMITTECMVTDLPKNDAADLGAAGGMGGMGGMGGMM</sequence>
<feature type="chain" id="PRO_1000130008" description="Chaperonin GroEL">
    <location>
        <begin position="1"/>
        <end position="548"/>
    </location>
</feature>
<feature type="binding site" evidence="1">
    <location>
        <begin position="30"/>
        <end position="33"/>
    </location>
    <ligand>
        <name>ATP</name>
        <dbReference type="ChEBI" id="CHEBI:30616"/>
    </ligand>
</feature>
<feature type="binding site" evidence="1">
    <location>
        <position position="51"/>
    </location>
    <ligand>
        <name>ATP</name>
        <dbReference type="ChEBI" id="CHEBI:30616"/>
    </ligand>
</feature>
<feature type="binding site" evidence="1">
    <location>
        <begin position="87"/>
        <end position="91"/>
    </location>
    <ligand>
        <name>ATP</name>
        <dbReference type="ChEBI" id="CHEBI:30616"/>
    </ligand>
</feature>
<feature type="binding site" evidence="1">
    <location>
        <position position="415"/>
    </location>
    <ligand>
        <name>ATP</name>
        <dbReference type="ChEBI" id="CHEBI:30616"/>
    </ligand>
</feature>
<feature type="binding site" evidence="1">
    <location>
        <begin position="479"/>
        <end position="481"/>
    </location>
    <ligand>
        <name>ATP</name>
        <dbReference type="ChEBI" id="CHEBI:30616"/>
    </ligand>
</feature>
<feature type="binding site" evidence="1">
    <location>
        <position position="495"/>
    </location>
    <ligand>
        <name>ATP</name>
        <dbReference type="ChEBI" id="CHEBI:30616"/>
    </ligand>
</feature>
<accession>B7NTK2</accession>
<protein>
    <recommendedName>
        <fullName evidence="1">Chaperonin GroEL</fullName>
        <ecNumber evidence="1">5.6.1.7</ecNumber>
    </recommendedName>
    <alternativeName>
        <fullName evidence="1">60 kDa chaperonin</fullName>
    </alternativeName>
    <alternativeName>
        <fullName evidence="1">Chaperonin-60</fullName>
        <shortName evidence="1">Cpn60</shortName>
    </alternativeName>
</protein>
<keyword id="KW-0067">ATP-binding</keyword>
<keyword id="KW-0143">Chaperone</keyword>
<keyword id="KW-0963">Cytoplasm</keyword>
<keyword id="KW-0413">Isomerase</keyword>
<keyword id="KW-0547">Nucleotide-binding</keyword>